<dbReference type="EC" id="1.14.-.-" evidence="1"/>
<dbReference type="EMBL" id="AE016826">
    <property type="protein sequence ID" value="AAO27051.1"/>
    <property type="molecule type" value="Genomic_DNA"/>
</dbReference>
<dbReference type="RefSeq" id="WP_011091452.1">
    <property type="nucleotide sequence ID" value="NC_004545.1"/>
</dbReference>
<dbReference type="SMR" id="Q89AG4"/>
<dbReference type="STRING" id="224915.bbp_330"/>
<dbReference type="KEGG" id="bab:bbp_330"/>
<dbReference type="eggNOG" id="COG1054">
    <property type="taxonomic scope" value="Bacteria"/>
</dbReference>
<dbReference type="HOGENOM" id="CLU_038878_1_1_6"/>
<dbReference type="OrthoDB" id="9778326at2"/>
<dbReference type="Proteomes" id="UP000000601">
    <property type="component" value="Chromosome"/>
</dbReference>
<dbReference type="GO" id="GO:0016705">
    <property type="term" value="F:oxidoreductase activity, acting on paired donors, with incorporation or reduction of molecular oxygen"/>
    <property type="evidence" value="ECO:0007669"/>
    <property type="project" value="UniProtKB-UniRule"/>
</dbReference>
<dbReference type="GO" id="GO:0006400">
    <property type="term" value="P:tRNA modification"/>
    <property type="evidence" value="ECO:0007669"/>
    <property type="project" value="UniProtKB-UniRule"/>
</dbReference>
<dbReference type="CDD" id="cd01518">
    <property type="entry name" value="RHOD_YceA"/>
    <property type="match status" value="1"/>
</dbReference>
<dbReference type="Gene3D" id="3.30.70.100">
    <property type="match status" value="1"/>
</dbReference>
<dbReference type="Gene3D" id="3.40.250.10">
    <property type="entry name" value="Rhodanese-like domain"/>
    <property type="match status" value="1"/>
</dbReference>
<dbReference type="HAMAP" id="MF_00469">
    <property type="entry name" value="TrhO"/>
    <property type="match status" value="1"/>
</dbReference>
<dbReference type="InterPro" id="IPR001763">
    <property type="entry name" value="Rhodanese-like_dom"/>
</dbReference>
<dbReference type="InterPro" id="IPR036873">
    <property type="entry name" value="Rhodanese-like_dom_sf"/>
</dbReference>
<dbReference type="InterPro" id="IPR022111">
    <property type="entry name" value="Rhodanese_C"/>
</dbReference>
<dbReference type="InterPro" id="IPR020936">
    <property type="entry name" value="TrhO"/>
</dbReference>
<dbReference type="InterPro" id="IPR040503">
    <property type="entry name" value="TRHO_N"/>
</dbReference>
<dbReference type="NCBIfam" id="NF001133">
    <property type="entry name" value="PRK00142.1-1"/>
    <property type="match status" value="1"/>
</dbReference>
<dbReference type="PANTHER" id="PTHR43846:SF1">
    <property type="entry name" value="TRNA URIDINE(34) HYDROXYLASE"/>
    <property type="match status" value="1"/>
</dbReference>
<dbReference type="PANTHER" id="PTHR43846">
    <property type="entry name" value="UPF0176 PROTEIN YCEA"/>
    <property type="match status" value="1"/>
</dbReference>
<dbReference type="Pfam" id="PF00581">
    <property type="entry name" value="Rhodanese"/>
    <property type="match status" value="1"/>
</dbReference>
<dbReference type="Pfam" id="PF12368">
    <property type="entry name" value="Rhodanese_C"/>
    <property type="match status" value="1"/>
</dbReference>
<dbReference type="Pfam" id="PF17773">
    <property type="entry name" value="UPF0176_N"/>
    <property type="match status" value="1"/>
</dbReference>
<dbReference type="SMART" id="SM00450">
    <property type="entry name" value="RHOD"/>
    <property type="match status" value="1"/>
</dbReference>
<dbReference type="SUPFAM" id="SSF52821">
    <property type="entry name" value="Rhodanese/Cell cycle control phosphatase"/>
    <property type="match status" value="1"/>
</dbReference>
<dbReference type="PROSITE" id="PS50206">
    <property type="entry name" value="RHODANESE_3"/>
    <property type="match status" value="1"/>
</dbReference>
<reference key="1">
    <citation type="journal article" date="2003" name="Proc. Natl. Acad. Sci. U.S.A.">
        <title>Reductive genome evolution in Buchnera aphidicola.</title>
        <authorList>
            <person name="van Ham R.C.H.J."/>
            <person name="Kamerbeek J."/>
            <person name="Palacios C."/>
            <person name="Rausell C."/>
            <person name="Abascal F."/>
            <person name="Bastolla U."/>
            <person name="Fernandez J.M."/>
            <person name="Jimenez L."/>
            <person name="Postigo M."/>
            <person name="Silva F.J."/>
            <person name="Tamames J."/>
            <person name="Viguera E."/>
            <person name="Latorre A."/>
            <person name="Valencia A."/>
            <person name="Moran F."/>
            <person name="Moya A."/>
        </authorList>
    </citation>
    <scope>NUCLEOTIDE SEQUENCE [LARGE SCALE GENOMIC DNA]</scope>
    <source>
        <strain>Bp</strain>
    </source>
</reference>
<feature type="chain" id="PRO_0000161457" description="tRNA uridine(34) hydroxylase">
    <location>
        <begin position="1"/>
        <end position="312"/>
    </location>
</feature>
<feature type="domain" description="Rhodanese" evidence="1">
    <location>
        <begin position="145"/>
        <end position="235"/>
    </location>
</feature>
<feature type="active site" description="Cysteine persulfide intermediate" evidence="1">
    <location>
        <position position="199"/>
    </location>
</feature>
<name>TRHO_BUCBP</name>
<gene>
    <name evidence="1" type="primary">trhO</name>
    <name type="ordered locus">bbp_330</name>
</gene>
<evidence type="ECO:0000255" key="1">
    <source>
        <dbReference type="HAMAP-Rule" id="MF_00469"/>
    </source>
</evidence>
<organism>
    <name type="scientific">Buchnera aphidicola subsp. Baizongia pistaciae (strain Bp)</name>
    <dbReference type="NCBI Taxonomy" id="224915"/>
    <lineage>
        <taxon>Bacteria</taxon>
        <taxon>Pseudomonadati</taxon>
        <taxon>Pseudomonadota</taxon>
        <taxon>Gammaproteobacteria</taxon>
        <taxon>Enterobacterales</taxon>
        <taxon>Erwiniaceae</taxon>
        <taxon>Buchnera</taxon>
    </lineage>
</organism>
<accession>Q89AG4</accession>
<proteinExistence type="inferred from homology"/>
<comment type="function">
    <text evidence="1">Catalyzes oxygen-dependent 5-hydroxyuridine (ho5U) modification at position 34 in tRNAs.</text>
</comment>
<comment type="catalytic activity">
    <reaction evidence="1">
        <text>uridine(34) in tRNA + AH2 + O2 = 5-hydroxyuridine(34) in tRNA + A + H2O</text>
        <dbReference type="Rhea" id="RHEA:64224"/>
        <dbReference type="Rhea" id="RHEA-COMP:11727"/>
        <dbReference type="Rhea" id="RHEA-COMP:13381"/>
        <dbReference type="ChEBI" id="CHEBI:13193"/>
        <dbReference type="ChEBI" id="CHEBI:15377"/>
        <dbReference type="ChEBI" id="CHEBI:15379"/>
        <dbReference type="ChEBI" id="CHEBI:17499"/>
        <dbReference type="ChEBI" id="CHEBI:65315"/>
        <dbReference type="ChEBI" id="CHEBI:136877"/>
    </reaction>
</comment>
<comment type="similarity">
    <text evidence="1">Belongs to the TrhO family.</text>
</comment>
<protein>
    <recommendedName>
        <fullName evidence="1">tRNA uridine(34) hydroxylase</fullName>
        <ecNumber evidence="1">1.14.-.-</ecNumber>
    </recommendedName>
    <alternativeName>
        <fullName evidence="1">tRNA hydroxylation protein O</fullName>
    </alternativeName>
</protein>
<keyword id="KW-0560">Oxidoreductase</keyword>
<keyword id="KW-1185">Reference proteome</keyword>
<keyword id="KW-0819">tRNA processing</keyword>
<sequence>MLYLYNKHPRIKLRNAAIFDNINRVTVSFYKYIFIHEPIKFRNSLYRMFFKFNIFGRVYIANEGINAQISIPKKIYHKAINIITTSFAVLKDINVNLALDNRESFWVLRMKVRKKILFDNLPIDFFDPNNVGTYLSAKDVNNMLENKNSVLVDMRNHYEYKIGHFDSAINVPVNTFREQLFHIVDFLKHYKNRDIIMYCTGGIRCEKATAWIKYNGFKNVYQIKGGIIKYVRDARIENLLVKFRGKNFVFDERMSEVVSKDVLSKCDQCENLCDTYVNCFNSRCHNLFIQCNFCRKKFHNCCSEHCFKTLLK</sequence>